<protein>
    <recommendedName>
        <fullName evidence="1">Arginine repressor</fullName>
    </recommendedName>
</protein>
<name>ARGR_CALBD</name>
<reference key="1">
    <citation type="submission" date="2009-01" db="EMBL/GenBank/DDBJ databases">
        <title>Complete sequence of chromosome of Caldicellulosiruptor becscii DSM 6725.</title>
        <authorList>
            <person name="Lucas S."/>
            <person name="Copeland A."/>
            <person name="Lapidus A."/>
            <person name="Glavina del Rio T."/>
            <person name="Tice H."/>
            <person name="Bruce D."/>
            <person name="Goodwin L."/>
            <person name="Pitluck S."/>
            <person name="Sims D."/>
            <person name="Meincke L."/>
            <person name="Brettin T."/>
            <person name="Detter J.C."/>
            <person name="Han C."/>
            <person name="Larimer F."/>
            <person name="Land M."/>
            <person name="Hauser L."/>
            <person name="Kyrpides N."/>
            <person name="Ovchinnikova G."/>
            <person name="Kataeva I."/>
            <person name="Adams M.W.W."/>
        </authorList>
    </citation>
    <scope>NUCLEOTIDE SEQUENCE [LARGE SCALE GENOMIC DNA]</scope>
    <source>
        <strain>ATCC BAA-1888 / DSM 6725 / KCTC 15123 / Z-1320</strain>
    </source>
</reference>
<dbReference type="EMBL" id="CP001393">
    <property type="protein sequence ID" value="ACM60434.1"/>
    <property type="molecule type" value="Genomic_DNA"/>
</dbReference>
<dbReference type="RefSeq" id="WP_013403283.1">
    <property type="nucleotide sequence ID" value="NC_012034.1"/>
</dbReference>
<dbReference type="SMR" id="B9MRY0"/>
<dbReference type="STRING" id="521460.Athe_1334"/>
<dbReference type="GeneID" id="31772681"/>
<dbReference type="KEGG" id="ate:Athe_1334"/>
<dbReference type="eggNOG" id="COG1438">
    <property type="taxonomic scope" value="Bacteria"/>
</dbReference>
<dbReference type="HOGENOM" id="CLU_097103_3_0_9"/>
<dbReference type="UniPathway" id="UPA00068"/>
<dbReference type="Proteomes" id="UP000007723">
    <property type="component" value="Chromosome"/>
</dbReference>
<dbReference type="GO" id="GO:0005737">
    <property type="term" value="C:cytoplasm"/>
    <property type="evidence" value="ECO:0007669"/>
    <property type="project" value="UniProtKB-SubCell"/>
</dbReference>
<dbReference type="GO" id="GO:0034618">
    <property type="term" value="F:arginine binding"/>
    <property type="evidence" value="ECO:0007669"/>
    <property type="project" value="InterPro"/>
</dbReference>
<dbReference type="GO" id="GO:0003677">
    <property type="term" value="F:DNA binding"/>
    <property type="evidence" value="ECO:0007669"/>
    <property type="project" value="UniProtKB-KW"/>
</dbReference>
<dbReference type="GO" id="GO:0003700">
    <property type="term" value="F:DNA-binding transcription factor activity"/>
    <property type="evidence" value="ECO:0007669"/>
    <property type="project" value="UniProtKB-UniRule"/>
</dbReference>
<dbReference type="GO" id="GO:0006526">
    <property type="term" value="P:L-arginine biosynthetic process"/>
    <property type="evidence" value="ECO:0007669"/>
    <property type="project" value="UniProtKB-UniPathway"/>
</dbReference>
<dbReference type="GO" id="GO:0051259">
    <property type="term" value="P:protein complex oligomerization"/>
    <property type="evidence" value="ECO:0007669"/>
    <property type="project" value="InterPro"/>
</dbReference>
<dbReference type="GO" id="GO:1900079">
    <property type="term" value="P:regulation of arginine biosynthetic process"/>
    <property type="evidence" value="ECO:0007669"/>
    <property type="project" value="UniProtKB-UniRule"/>
</dbReference>
<dbReference type="Gene3D" id="3.30.1360.40">
    <property type="match status" value="1"/>
</dbReference>
<dbReference type="Gene3D" id="1.10.10.10">
    <property type="entry name" value="Winged helix-like DNA-binding domain superfamily/Winged helix DNA-binding domain"/>
    <property type="match status" value="1"/>
</dbReference>
<dbReference type="HAMAP" id="MF_00173">
    <property type="entry name" value="Arg_repressor"/>
    <property type="match status" value="1"/>
</dbReference>
<dbReference type="InterPro" id="IPR001669">
    <property type="entry name" value="Arg_repress"/>
</dbReference>
<dbReference type="InterPro" id="IPR020899">
    <property type="entry name" value="Arg_repress_C"/>
</dbReference>
<dbReference type="InterPro" id="IPR036251">
    <property type="entry name" value="Arg_repress_C_sf"/>
</dbReference>
<dbReference type="InterPro" id="IPR020900">
    <property type="entry name" value="Arg_repress_DNA-bd"/>
</dbReference>
<dbReference type="InterPro" id="IPR036388">
    <property type="entry name" value="WH-like_DNA-bd_sf"/>
</dbReference>
<dbReference type="InterPro" id="IPR036390">
    <property type="entry name" value="WH_DNA-bd_sf"/>
</dbReference>
<dbReference type="NCBIfam" id="TIGR01529">
    <property type="entry name" value="argR_whole"/>
    <property type="match status" value="1"/>
</dbReference>
<dbReference type="NCBIfam" id="NF001680">
    <property type="entry name" value="PRK00441.1"/>
    <property type="match status" value="1"/>
</dbReference>
<dbReference type="PANTHER" id="PTHR34471">
    <property type="entry name" value="ARGININE REPRESSOR"/>
    <property type="match status" value="1"/>
</dbReference>
<dbReference type="PANTHER" id="PTHR34471:SF1">
    <property type="entry name" value="ARGININE REPRESSOR"/>
    <property type="match status" value="1"/>
</dbReference>
<dbReference type="Pfam" id="PF01316">
    <property type="entry name" value="Arg_repressor"/>
    <property type="match status" value="1"/>
</dbReference>
<dbReference type="Pfam" id="PF02863">
    <property type="entry name" value="Arg_repressor_C"/>
    <property type="match status" value="1"/>
</dbReference>
<dbReference type="PRINTS" id="PR01467">
    <property type="entry name" value="ARGREPRESSOR"/>
</dbReference>
<dbReference type="SUPFAM" id="SSF55252">
    <property type="entry name" value="C-terminal domain of arginine repressor"/>
    <property type="match status" value="1"/>
</dbReference>
<dbReference type="SUPFAM" id="SSF46785">
    <property type="entry name" value="Winged helix' DNA-binding domain"/>
    <property type="match status" value="1"/>
</dbReference>
<organism>
    <name type="scientific">Caldicellulosiruptor bescii (strain ATCC BAA-1888 / DSM 6725 / KCTC 15123 / Z-1320)</name>
    <name type="common">Anaerocellum thermophilum</name>
    <dbReference type="NCBI Taxonomy" id="521460"/>
    <lineage>
        <taxon>Bacteria</taxon>
        <taxon>Bacillati</taxon>
        <taxon>Bacillota</taxon>
        <taxon>Bacillota incertae sedis</taxon>
        <taxon>Caldicellulosiruptorales</taxon>
        <taxon>Caldicellulosiruptoraceae</taxon>
        <taxon>Caldicellulosiruptor</taxon>
    </lineage>
</organism>
<gene>
    <name evidence="1" type="primary">argR</name>
    <name type="ordered locus">Athe_1334</name>
</gene>
<sequence length="152" mass="16569">MKSERQQKILEIIQNEDIETQEELVERLKALGYDVTQATVSRDIKELRLTKVLTETGKYKYAVLSGPEANITEKLIKVFSESIVKYDTADNLVIIKTITGAAQGAAAAIDSLSWPEVVGTIAGDDTIFIATKGSAAADKIVERIKAIISQGE</sequence>
<comment type="function">
    <text evidence="1">Regulates arginine biosynthesis genes.</text>
</comment>
<comment type="pathway">
    <text>Amino-acid biosynthesis; L-arginine biosynthesis [regulation].</text>
</comment>
<comment type="subcellular location">
    <subcellularLocation>
        <location evidence="1">Cytoplasm</location>
    </subcellularLocation>
</comment>
<comment type="similarity">
    <text evidence="1">Belongs to the ArgR family.</text>
</comment>
<keyword id="KW-0028">Amino-acid biosynthesis</keyword>
<keyword id="KW-0055">Arginine biosynthesis</keyword>
<keyword id="KW-0963">Cytoplasm</keyword>
<keyword id="KW-0238">DNA-binding</keyword>
<keyword id="KW-0678">Repressor</keyword>
<keyword id="KW-0804">Transcription</keyword>
<keyword id="KW-0805">Transcription regulation</keyword>
<proteinExistence type="inferred from homology"/>
<evidence type="ECO:0000255" key="1">
    <source>
        <dbReference type="HAMAP-Rule" id="MF_00173"/>
    </source>
</evidence>
<accession>B9MRY0</accession>
<feature type="chain" id="PRO_1000123782" description="Arginine repressor">
    <location>
        <begin position="1"/>
        <end position="152"/>
    </location>
</feature>